<gene>
    <name evidence="1" type="primary">pstB</name>
    <name type="ordered locus">BCE_4349</name>
</gene>
<dbReference type="EC" id="7.3.2.1" evidence="1"/>
<dbReference type="EMBL" id="AE017194">
    <property type="protein sequence ID" value="AAS43250.1"/>
    <property type="molecule type" value="Genomic_DNA"/>
</dbReference>
<dbReference type="SMR" id="Q730R7"/>
<dbReference type="KEGG" id="bca:BCE_4349"/>
<dbReference type="HOGENOM" id="CLU_000604_1_22_9"/>
<dbReference type="Proteomes" id="UP000002527">
    <property type="component" value="Chromosome"/>
</dbReference>
<dbReference type="GO" id="GO:0005886">
    <property type="term" value="C:plasma membrane"/>
    <property type="evidence" value="ECO:0007669"/>
    <property type="project" value="UniProtKB-SubCell"/>
</dbReference>
<dbReference type="GO" id="GO:0005524">
    <property type="term" value="F:ATP binding"/>
    <property type="evidence" value="ECO:0007669"/>
    <property type="project" value="UniProtKB-KW"/>
</dbReference>
<dbReference type="GO" id="GO:0016887">
    <property type="term" value="F:ATP hydrolysis activity"/>
    <property type="evidence" value="ECO:0007669"/>
    <property type="project" value="InterPro"/>
</dbReference>
<dbReference type="GO" id="GO:0015415">
    <property type="term" value="F:ATPase-coupled phosphate ion transmembrane transporter activity"/>
    <property type="evidence" value="ECO:0007669"/>
    <property type="project" value="UniProtKB-EC"/>
</dbReference>
<dbReference type="GO" id="GO:0035435">
    <property type="term" value="P:phosphate ion transmembrane transport"/>
    <property type="evidence" value="ECO:0007669"/>
    <property type="project" value="InterPro"/>
</dbReference>
<dbReference type="CDD" id="cd03260">
    <property type="entry name" value="ABC_PstB_phosphate_transporter"/>
    <property type="match status" value="1"/>
</dbReference>
<dbReference type="FunFam" id="3.40.50.300:FF:000132">
    <property type="entry name" value="Phosphate import ATP-binding protein PstB"/>
    <property type="match status" value="1"/>
</dbReference>
<dbReference type="Gene3D" id="3.40.50.300">
    <property type="entry name" value="P-loop containing nucleotide triphosphate hydrolases"/>
    <property type="match status" value="1"/>
</dbReference>
<dbReference type="InterPro" id="IPR003593">
    <property type="entry name" value="AAA+_ATPase"/>
</dbReference>
<dbReference type="InterPro" id="IPR003439">
    <property type="entry name" value="ABC_transporter-like_ATP-bd"/>
</dbReference>
<dbReference type="InterPro" id="IPR017871">
    <property type="entry name" value="ABC_transporter-like_CS"/>
</dbReference>
<dbReference type="InterPro" id="IPR027417">
    <property type="entry name" value="P-loop_NTPase"/>
</dbReference>
<dbReference type="InterPro" id="IPR005670">
    <property type="entry name" value="PstB-like"/>
</dbReference>
<dbReference type="NCBIfam" id="TIGR00972">
    <property type="entry name" value="3a0107s01c2"/>
    <property type="match status" value="1"/>
</dbReference>
<dbReference type="PANTHER" id="PTHR43423">
    <property type="entry name" value="ABC TRANSPORTER I FAMILY MEMBER 17"/>
    <property type="match status" value="1"/>
</dbReference>
<dbReference type="PANTHER" id="PTHR43423:SF1">
    <property type="entry name" value="ABC TRANSPORTER I FAMILY MEMBER 17"/>
    <property type="match status" value="1"/>
</dbReference>
<dbReference type="Pfam" id="PF00005">
    <property type="entry name" value="ABC_tran"/>
    <property type="match status" value="1"/>
</dbReference>
<dbReference type="SMART" id="SM00382">
    <property type="entry name" value="AAA"/>
    <property type="match status" value="1"/>
</dbReference>
<dbReference type="SUPFAM" id="SSF52540">
    <property type="entry name" value="P-loop containing nucleoside triphosphate hydrolases"/>
    <property type="match status" value="1"/>
</dbReference>
<dbReference type="PROSITE" id="PS00211">
    <property type="entry name" value="ABC_TRANSPORTER_1"/>
    <property type="match status" value="1"/>
</dbReference>
<dbReference type="PROSITE" id="PS50893">
    <property type="entry name" value="ABC_TRANSPORTER_2"/>
    <property type="match status" value="1"/>
</dbReference>
<dbReference type="PROSITE" id="PS51238">
    <property type="entry name" value="PSTB"/>
    <property type="match status" value="1"/>
</dbReference>
<name>PSTB_BACC1</name>
<evidence type="ECO:0000255" key="1">
    <source>
        <dbReference type="HAMAP-Rule" id="MF_01702"/>
    </source>
</evidence>
<keyword id="KW-0067">ATP-binding</keyword>
<keyword id="KW-1003">Cell membrane</keyword>
<keyword id="KW-0472">Membrane</keyword>
<keyword id="KW-0547">Nucleotide-binding</keyword>
<keyword id="KW-0592">Phosphate transport</keyword>
<keyword id="KW-1278">Translocase</keyword>
<keyword id="KW-0813">Transport</keyword>
<accession>Q730R7</accession>
<comment type="function">
    <text evidence="1">Part of the ABC transporter complex PstSACB involved in phosphate import. Responsible for energy coupling to the transport system.</text>
</comment>
<comment type="catalytic activity">
    <reaction evidence="1">
        <text>phosphate(out) + ATP + H2O = ADP + 2 phosphate(in) + H(+)</text>
        <dbReference type="Rhea" id="RHEA:24440"/>
        <dbReference type="ChEBI" id="CHEBI:15377"/>
        <dbReference type="ChEBI" id="CHEBI:15378"/>
        <dbReference type="ChEBI" id="CHEBI:30616"/>
        <dbReference type="ChEBI" id="CHEBI:43474"/>
        <dbReference type="ChEBI" id="CHEBI:456216"/>
        <dbReference type="EC" id="7.3.2.1"/>
    </reaction>
</comment>
<comment type="subunit">
    <text evidence="1">The complex is composed of two ATP-binding proteins (PstB), two transmembrane proteins (PstC and PstA) and a solute-binding protein (PstS).</text>
</comment>
<comment type="subcellular location">
    <subcellularLocation>
        <location evidence="1">Cell membrane</location>
        <topology evidence="1">Peripheral membrane protein</topology>
    </subcellularLocation>
</comment>
<comment type="similarity">
    <text evidence="1">Belongs to the ABC transporter superfamily. Phosphate importer (TC 3.A.1.7) family.</text>
</comment>
<sequence length="271" mass="30617">MVATVVNVQVKNEEKIETAPKKVVFDTKNLNLWYGEDHALKDINLSIHENEVTAIIGPSGCGKSTYLKTLNRMVELVPIVRTTGVIEYRERNIFDKSYPVEELRTHVGMVFQKPNPFPKSIYENVAYGPKIHGISDKKTLDEIVEKSLRGAAIWDELKDRLHDNAYGLSGGQQQRLCIARCLAIEPDVILMDEPTSALDPISTLKVEELIQELKKDFSIVIVTHNMQQAARISDKTAFFLSGEVVEYTDTNKLFTTPSDKRTEDYITGRFG</sequence>
<feature type="chain" id="PRO_0000092772" description="Phosphate import ATP-binding protein PstB">
    <location>
        <begin position="1"/>
        <end position="271"/>
    </location>
</feature>
<feature type="domain" description="ABC transporter" evidence="1">
    <location>
        <begin position="25"/>
        <end position="266"/>
    </location>
</feature>
<feature type="binding site" evidence="1">
    <location>
        <begin position="57"/>
        <end position="64"/>
    </location>
    <ligand>
        <name>ATP</name>
        <dbReference type="ChEBI" id="CHEBI:30616"/>
    </ligand>
</feature>
<reference key="1">
    <citation type="journal article" date="2004" name="Nucleic Acids Res.">
        <title>The genome sequence of Bacillus cereus ATCC 10987 reveals metabolic adaptations and a large plasmid related to Bacillus anthracis pXO1.</title>
        <authorList>
            <person name="Rasko D.A."/>
            <person name="Ravel J."/>
            <person name="Oekstad O.A."/>
            <person name="Helgason E."/>
            <person name="Cer R.Z."/>
            <person name="Jiang L."/>
            <person name="Shores K.A."/>
            <person name="Fouts D.E."/>
            <person name="Tourasse N.J."/>
            <person name="Angiuoli S.V."/>
            <person name="Kolonay J.F."/>
            <person name="Nelson W.C."/>
            <person name="Kolstoe A.-B."/>
            <person name="Fraser C.M."/>
            <person name="Read T.D."/>
        </authorList>
    </citation>
    <scope>NUCLEOTIDE SEQUENCE [LARGE SCALE GENOMIC DNA]</scope>
    <source>
        <strain>ATCC 10987 / NRS 248</strain>
    </source>
</reference>
<protein>
    <recommendedName>
        <fullName evidence="1">Phosphate import ATP-binding protein PstB</fullName>
        <ecNumber evidence="1">7.3.2.1</ecNumber>
    </recommendedName>
    <alternativeName>
        <fullName evidence="1">ABC phosphate transporter</fullName>
    </alternativeName>
    <alternativeName>
        <fullName evidence="1">Phosphate-transporting ATPase</fullName>
    </alternativeName>
</protein>
<proteinExistence type="inferred from homology"/>
<organism>
    <name type="scientific">Bacillus cereus (strain ATCC 10987 / NRS 248)</name>
    <dbReference type="NCBI Taxonomy" id="222523"/>
    <lineage>
        <taxon>Bacteria</taxon>
        <taxon>Bacillati</taxon>
        <taxon>Bacillota</taxon>
        <taxon>Bacilli</taxon>
        <taxon>Bacillales</taxon>
        <taxon>Bacillaceae</taxon>
        <taxon>Bacillus</taxon>
        <taxon>Bacillus cereus group</taxon>
    </lineage>
</organism>